<feature type="chain" id="PRO_0000390163" description="NADH-quinone oxidoreductase subunit K">
    <location>
        <begin position="1"/>
        <end position="102"/>
    </location>
</feature>
<feature type="transmembrane region" description="Helical" evidence="1">
    <location>
        <begin position="6"/>
        <end position="26"/>
    </location>
</feature>
<feature type="transmembrane region" description="Helical" evidence="1">
    <location>
        <begin position="30"/>
        <end position="50"/>
    </location>
</feature>
<feature type="transmembrane region" description="Helical" evidence="1">
    <location>
        <begin position="62"/>
        <end position="82"/>
    </location>
</feature>
<protein>
    <recommendedName>
        <fullName evidence="1">NADH-quinone oxidoreductase subunit K</fullName>
        <ecNumber evidence="1">7.1.1.-</ecNumber>
    </recommendedName>
    <alternativeName>
        <fullName evidence="1">NADH dehydrogenase I subunit K</fullName>
    </alternativeName>
    <alternativeName>
        <fullName evidence="1">NDH-1 subunit K</fullName>
    </alternativeName>
</protein>
<dbReference type="EC" id="7.1.1.-" evidence="1"/>
<dbReference type="EMBL" id="FM209186">
    <property type="protein sequence ID" value="CAW27185.1"/>
    <property type="molecule type" value="Genomic_DNA"/>
</dbReference>
<dbReference type="RefSeq" id="WP_003090475.1">
    <property type="nucleotide sequence ID" value="NC_011770.1"/>
</dbReference>
<dbReference type="SMR" id="B7VAQ6"/>
<dbReference type="GeneID" id="77220817"/>
<dbReference type="KEGG" id="pag:PLES_24591"/>
<dbReference type="HOGENOM" id="CLU_144724_0_1_6"/>
<dbReference type="GO" id="GO:0030964">
    <property type="term" value="C:NADH dehydrogenase complex"/>
    <property type="evidence" value="ECO:0007669"/>
    <property type="project" value="TreeGrafter"/>
</dbReference>
<dbReference type="GO" id="GO:0005886">
    <property type="term" value="C:plasma membrane"/>
    <property type="evidence" value="ECO:0007669"/>
    <property type="project" value="UniProtKB-SubCell"/>
</dbReference>
<dbReference type="GO" id="GO:0050136">
    <property type="term" value="F:NADH:ubiquinone reductase (non-electrogenic) activity"/>
    <property type="evidence" value="ECO:0007669"/>
    <property type="project" value="UniProtKB-UniRule"/>
</dbReference>
<dbReference type="GO" id="GO:0048038">
    <property type="term" value="F:quinone binding"/>
    <property type="evidence" value="ECO:0007669"/>
    <property type="project" value="UniProtKB-KW"/>
</dbReference>
<dbReference type="GO" id="GO:0042773">
    <property type="term" value="P:ATP synthesis coupled electron transport"/>
    <property type="evidence" value="ECO:0007669"/>
    <property type="project" value="InterPro"/>
</dbReference>
<dbReference type="FunFam" id="1.10.287.3510:FF:000001">
    <property type="entry name" value="NADH-quinone oxidoreductase subunit K"/>
    <property type="match status" value="1"/>
</dbReference>
<dbReference type="Gene3D" id="1.10.287.3510">
    <property type="match status" value="1"/>
</dbReference>
<dbReference type="HAMAP" id="MF_01456">
    <property type="entry name" value="NDH1_NuoK"/>
    <property type="match status" value="1"/>
</dbReference>
<dbReference type="InterPro" id="IPR001133">
    <property type="entry name" value="NADH_UbQ_OxRdtase_chain4L/K"/>
</dbReference>
<dbReference type="InterPro" id="IPR039428">
    <property type="entry name" value="NUOK/Mnh_C1-like"/>
</dbReference>
<dbReference type="NCBIfam" id="NF004319">
    <property type="entry name" value="PRK05715.1-1"/>
    <property type="match status" value="1"/>
</dbReference>
<dbReference type="NCBIfam" id="NF004320">
    <property type="entry name" value="PRK05715.1-2"/>
    <property type="match status" value="1"/>
</dbReference>
<dbReference type="PANTHER" id="PTHR11434:SF16">
    <property type="entry name" value="NADH-UBIQUINONE OXIDOREDUCTASE CHAIN 4L"/>
    <property type="match status" value="1"/>
</dbReference>
<dbReference type="PANTHER" id="PTHR11434">
    <property type="entry name" value="NADH-UBIQUINONE OXIDOREDUCTASE SUBUNIT ND4L"/>
    <property type="match status" value="1"/>
</dbReference>
<dbReference type="Pfam" id="PF00420">
    <property type="entry name" value="Oxidored_q2"/>
    <property type="match status" value="1"/>
</dbReference>
<evidence type="ECO:0000255" key="1">
    <source>
        <dbReference type="HAMAP-Rule" id="MF_01456"/>
    </source>
</evidence>
<organism>
    <name type="scientific">Pseudomonas aeruginosa (strain LESB58)</name>
    <dbReference type="NCBI Taxonomy" id="557722"/>
    <lineage>
        <taxon>Bacteria</taxon>
        <taxon>Pseudomonadati</taxon>
        <taxon>Pseudomonadota</taxon>
        <taxon>Gammaproteobacteria</taxon>
        <taxon>Pseudomonadales</taxon>
        <taxon>Pseudomonadaceae</taxon>
        <taxon>Pseudomonas</taxon>
    </lineage>
</organism>
<gene>
    <name evidence="1" type="primary">nuoK</name>
    <name type="ordered locus">PLES_24591</name>
</gene>
<sequence length="102" mass="10954">MNAIPLEHGLALASVLFALGLVGLMVRRNILFVLMSLEVMMNAAALAFVVAGSRWGQPDGQVMFILVLSLAAAEASIGLAILLQLYRRFHTLDIDAASEMRG</sequence>
<name>NUOK_PSEA8</name>
<accession>B7VAQ6</accession>
<reference key="1">
    <citation type="journal article" date="2009" name="Genome Res.">
        <title>Newly introduced genomic prophage islands are critical determinants of in vivo competitiveness in the Liverpool epidemic strain of Pseudomonas aeruginosa.</title>
        <authorList>
            <person name="Winstanley C."/>
            <person name="Langille M.G.I."/>
            <person name="Fothergill J.L."/>
            <person name="Kukavica-Ibrulj I."/>
            <person name="Paradis-Bleau C."/>
            <person name="Sanschagrin F."/>
            <person name="Thomson N.R."/>
            <person name="Winsor G.L."/>
            <person name="Quail M.A."/>
            <person name="Lennard N."/>
            <person name="Bignell A."/>
            <person name="Clarke L."/>
            <person name="Seeger K."/>
            <person name="Saunders D."/>
            <person name="Harris D."/>
            <person name="Parkhill J."/>
            <person name="Hancock R.E.W."/>
            <person name="Brinkman F.S.L."/>
            <person name="Levesque R.C."/>
        </authorList>
    </citation>
    <scope>NUCLEOTIDE SEQUENCE [LARGE SCALE GENOMIC DNA]</scope>
    <source>
        <strain>LESB58</strain>
    </source>
</reference>
<proteinExistence type="inferred from homology"/>
<comment type="function">
    <text evidence="1">NDH-1 shuttles electrons from NADH, via FMN and iron-sulfur (Fe-S) centers, to quinones in the respiratory chain. The immediate electron acceptor for the enzyme in this species is believed to be ubiquinone. Couples the redox reaction to proton translocation (for every two electrons transferred, four hydrogen ions are translocated across the cytoplasmic membrane), and thus conserves the redox energy in a proton gradient.</text>
</comment>
<comment type="catalytic activity">
    <reaction evidence="1">
        <text>a quinone + NADH + 5 H(+)(in) = a quinol + NAD(+) + 4 H(+)(out)</text>
        <dbReference type="Rhea" id="RHEA:57888"/>
        <dbReference type="ChEBI" id="CHEBI:15378"/>
        <dbReference type="ChEBI" id="CHEBI:24646"/>
        <dbReference type="ChEBI" id="CHEBI:57540"/>
        <dbReference type="ChEBI" id="CHEBI:57945"/>
        <dbReference type="ChEBI" id="CHEBI:132124"/>
    </reaction>
</comment>
<comment type="subunit">
    <text evidence="1">NDH-1 is composed of 13 different subunits. Subunits NuoA, H, J, K, L, M, N constitute the membrane sector of the complex.</text>
</comment>
<comment type="subcellular location">
    <subcellularLocation>
        <location evidence="1">Cell inner membrane</location>
        <topology evidence="1">Multi-pass membrane protein</topology>
    </subcellularLocation>
</comment>
<comment type="similarity">
    <text evidence="1">Belongs to the complex I subunit 4L family.</text>
</comment>
<keyword id="KW-0997">Cell inner membrane</keyword>
<keyword id="KW-1003">Cell membrane</keyword>
<keyword id="KW-0472">Membrane</keyword>
<keyword id="KW-0520">NAD</keyword>
<keyword id="KW-0874">Quinone</keyword>
<keyword id="KW-1278">Translocase</keyword>
<keyword id="KW-0812">Transmembrane</keyword>
<keyword id="KW-1133">Transmembrane helix</keyword>
<keyword id="KW-0813">Transport</keyword>
<keyword id="KW-0830">Ubiquinone</keyword>